<gene>
    <name evidence="1" type="primary">rpl32</name>
</gene>
<name>RK32_SOYBN</name>
<reference key="1">
    <citation type="journal article" date="2005" name="Plant Mol. Biol.">
        <title>Complete chloroplast genome sequence of Glycine max and comparative analyses with other legume genomes.</title>
        <authorList>
            <person name="Saski C."/>
            <person name="Lee S.-B."/>
            <person name="Daniell H."/>
            <person name="Wood T.C."/>
            <person name="Tomkins J."/>
            <person name="Kim H.-G."/>
            <person name="Jansen R.K."/>
        </authorList>
    </citation>
    <scope>NUCLEOTIDE SEQUENCE [LARGE SCALE GENOMIC DNA]</scope>
    <source>
        <strain>cv. PI 437654</strain>
    </source>
</reference>
<protein>
    <recommendedName>
        <fullName evidence="1">Large ribosomal subunit protein bL32c</fullName>
    </recommendedName>
    <alternativeName>
        <fullName evidence="2">50S ribosomal protein L32, chloroplastic</fullName>
    </alternativeName>
</protein>
<evidence type="ECO:0000255" key="1">
    <source>
        <dbReference type="HAMAP-Rule" id="MF_00340"/>
    </source>
</evidence>
<evidence type="ECO:0000305" key="2"/>
<keyword id="KW-0150">Chloroplast</keyword>
<keyword id="KW-0934">Plastid</keyword>
<keyword id="KW-1185">Reference proteome</keyword>
<keyword id="KW-0687">Ribonucleoprotein</keyword>
<keyword id="KW-0689">Ribosomal protein</keyword>
<accession>Q2PMN0</accession>
<organism>
    <name type="scientific">Glycine max</name>
    <name type="common">Soybean</name>
    <name type="synonym">Glycine hispida</name>
    <dbReference type="NCBI Taxonomy" id="3847"/>
    <lineage>
        <taxon>Eukaryota</taxon>
        <taxon>Viridiplantae</taxon>
        <taxon>Streptophyta</taxon>
        <taxon>Embryophyta</taxon>
        <taxon>Tracheophyta</taxon>
        <taxon>Spermatophyta</taxon>
        <taxon>Magnoliopsida</taxon>
        <taxon>eudicotyledons</taxon>
        <taxon>Gunneridae</taxon>
        <taxon>Pentapetalae</taxon>
        <taxon>rosids</taxon>
        <taxon>fabids</taxon>
        <taxon>Fabales</taxon>
        <taxon>Fabaceae</taxon>
        <taxon>Papilionoideae</taxon>
        <taxon>50 kb inversion clade</taxon>
        <taxon>NPAAA clade</taxon>
        <taxon>indigoferoid/millettioid clade</taxon>
        <taxon>Phaseoleae</taxon>
        <taxon>Glycine</taxon>
        <taxon>Glycine subgen. Soja</taxon>
    </lineage>
</organism>
<feature type="chain" id="PRO_0000276469" description="Large ribosomal subunit protein bL32c">
    <location>
        <begin position="1"/>
        <end position="53"/>
    </location>
</feature>
<sequence>MAVPKKRTSISKKRIRNTLWKKKGYFTTLKAFSLAQSIFTGNSKSFFCNKYKR</sequence>
<dbReference type="EMBL" id="DQ317523">
    <property type="protein sequence ID" value="ABC25179.1"/>
    <property type="molecule type" value="Genomic_DNA"/>
</dbReference>
<dbReference type="RefSeq" id="YP_538820.1">
    <property type="nucleotide sequence ID" value="NC_007942.1"/>
</dbReference>
<dbReference type="SMR" id="Q2PMN0"/>
<dbReference type="FunCoup" id="Q2PMN0">
    <property type="interactions" value="540"/>
</dbReference>
<dbReference type="STRING" id="3847.Q2PMN0"/>
<dbReference type="GeneID" id="3989364"/>
<dbReference type="KEGG" id="gmx:3989364"/>
<dbReference type="InParanoid" id="Q2PMN0"/>
<dbReference type="Proteomes" id="UP000008827">
    <property type="component" value="Chloroplast"/>
</dbReference>
<dbReference type="GO" id="GO:0009507">
    <property type="term" value="C:chloroplast"/>
    <property type="evidence" value="ECO:0007669"/>
    <property type="project" value="UniProtKB-SubCell"/>
</dbReference>
<dbReference type="GO" id="GO:0015934">
    <property type="term" value="C:large ribosomal subunit"/>
    <property type="evidence" value="ECO:0007669"/>
    <property type="project" value="InterPro"/>
</dbReference>
<dbReference type="GO" id="GO:0003735">
    <property type="term" value="F:structural constituent of ribosome"/>
    <property type="evidence" value="ECO:0007669"/>
    <property type="project" value="InterPro"/>
</dbReference>
<dbReference type="GO" id="GO:0006412">
    <property type="term" value="P:translation"/>
    <property type="evidence" value="ECO:0007669"/>
    <property type="project" value="UniProtKB-UniRule"/>
</dbReference>
<dbReference type="HAMAP" id="MF_00340">
    <property type="entry name" value="Ribosomal_bL32"/>
    <property type="match status" value="1"/>
</dbReference>
<dbReference type="InterPro" id="IPR002677">
    <property type="entry name" value="Ribosomal_bL32"/>
</dbReference>
<dbReference type="InterPro" id="IPR044958">
    <property type="entry name" value="Ribosomal_bL32_plant/cyanobact"/>
</dbReference>
<dbReference type="InterPro" id="IPR011332">
    <property type="entry name" value="Ribosomal_zn-bd"/>
</dbReference>
<dbReference type="PANTHER" id="PTHR36083">
    <property type="entry name" value="50S RIBOSOMAL PROTEIN L32, CHLOROPLASTIC"/>
    <property type="match status" value="1"/>
</dbReference>
<dbReference type="PANTHER" id="PTHR36083:SF1">
    <property type="entry name" value="LARGE RIBOSOMAL SUBUNIT PROTEIN BL32C"/>
    <property type="match status" value="1"/>
</dbReference>
<dbReference type="Pfam" id="PF01783">
    <property type="entry name" value="Ribosomal_L32p"/>
    <property type="match status" value="1"/>
</dbReference>
<dbReference type="SUPFAM" id="SSF57829">
    <property type="entry name" value="Zn-binding ribosomal proteins"/>
    <property type="match status" value="1"/>
</dbReference>
<proteinExistence type="inferred from homology"/>
<comment type="subcellular location">
    <subcellularLocation>
        <location>Plastid</location>
        <location>Chloroplast</location>
    </subcellularLocation>
</comment>
<comment type="similarity">
    <text evidence="1">Belongs to the bacterial ribosomal protein bL32 family.</text>
</comment>
<geneLocation type="chloroplast"/>